<gene>
    <name type="ordered locus">MJ1599</name>
</gene>
<proteinExistence type="predicted"/>
<accession>Q58994</accession>
<dbReference type="EMBL" id="L77117">
    <property type="protein sequence ID" value="AAB99626.1"/>
    <property type="molecule type" value="Genomic_DNA"/>
</dbReference>
<dbReference type="PIR" id="F64499">
    <property type="entry name" value="F64499"/>
</dbReference>
<dbReference type="RefSeq" id="WP_010871124.1">
    <property type="nucleotide sequence ID" value="NC_000909.1"/>
</dbReference>
<dbReference type="SMR" id="Q58994"/>
<dbReference type="STRING" id="243232.MJ_1599"/>
<dbReference type="PaxDb" id="243232-MJ_1599"/>
<dbReference type="DNASU" id="1452508"/>
<dbReference type="EnsemblBacteria" id="AAB99626">
    <property type="protein sequence ID" value="AAB99626"/>
    <property type="gene ID" value="MJ_1599"/>
</dbReference>
<dbReference type="GeneID" id="1452508"/>
<dbReference type="KEGG" id="mja:MJ_1599"/>
<dbReference type="eggNOG" id="arCOG00046">
    <property type="taxonomic scope" value="Archaea"/>
</dbReference>
<dbReference type="HOGENOM" id="CLU_1014190_0_0_2"/>
<dbReference type="InParanoid" id="Q58994"/>
<dbReference type="OrthoDB" id="10500at2157"/>
<dbReference type="PhylomeDB" id="Q58994"/>
<dbReference type="Proteomes" id="UP000000805">
    <property type="component" value="Chromosome"/>
</dbReference>
<dbReference type="GO" id="GO:0003824">
    <property type="term" value="F:catalytic activity"/>
    <property type="evidence" value="ECO:0007669"/>
    <property type="project" value="InterPro"/>
</dbReference>
<dbReference type="Gene3D" id="3.40.50.620">
    <property type="entry name" value="HUPs"/>
    <property type="match status" value="1"/>
</dbReference>
<dbReference type="InterPro" id="IPR012121">
    <property type="entry name" value="ATPase_PP-loop_MJ1599"/>
</dbReference>
<dbReference type="InterPro" id="IPR052188">
    <property type="entry name" value="Ni-pincer_cofactor_biosynth"/>
</dbReference>
<dbReference type="InterPro" id="IPR002500">
    <property type="entry name" value="PAPS_reduct_dom"/>
</dbReference>
<dbReference type="InterPro" id="IPR014729">
    <property type="entry name" value="Rossmann-like_a/b/a_fold"/>
</dbReference>
<dbReference type="PANTHER" id="PTHR43169:SF3">
    <property type="entry name" value="ATPASE, PP-LOOP SUPERFAMILY-RELATED"/>
    <property type="match status" value="1"/>
</dbReference>
<dbReference type="PANTHER" id="PTHR43169">
    <property type="entry name" value="EXSB FAMILY PROTEIN"/>
    <property type="match status" value="1"/>
</dbReference>
<dbReference type="Pfam" id="PF01507">
    <property type="entry name" value="PAPS_reduct"/>
    <property type="match status" value="1"/>
</dbReference>
<dbReference type="PIRSF" id="PIRSF036668">
    <property type="entry name" value="ATPase_UCP036668"/>
    <property type="match status" value="1"/>
</dbReference>
<dbReference type="SUPFAM" id="SSF52402">
    <property type="entry name" value="Adenine nucleotide alpha hydrolases-like"/>
    <property type="match status" value="1"/>
</dbReference>
<name>Y1599_METJA</name>
<protein>
    <recommendedName>
        <fullName>Uncharacterized protein MJ1599</fullName>
    </recommendedName>
</protein>
<organism>
    <name type="scientific">Methanocaldococcus jannaschii (strain ATCC 43067 / DSM 2661 / JAL-1 / JCM 10045 / NBRC 100440)</name>
    <name type="common">Methanococcus jannaschii</name>
    <dbReference type="NCBI Taxonomy" id="243232"/>
    <lineage>
        <taxon>Archaea</taxon>
        <taxon>Methanobacteriati</taxon>
        <taxon>Methanobacteriota</taxon>
        <taxon>Methanomada group</taxon>
        <taxon>Methanococci</taxon>
        <taxon>Methanococcales</taxon>
        <taxon>Methanocaldococcaceae</taxon>
        <taxon>Methanocaldococcus</taxon>
    </lineage>
</organism>
<keyword id="KW-1185">Reference proteome</keyword>
<feature type="chain" id="PRO_0000107433" description="Uncharacterized protein MJ1599">
    <location>
        <begin position="1"/>
        <end position="277"/>
    </location>
</feature>
<reference key="1">
    <citation type="journal article" date="1996" name="Science">
        <title>Complete genome sequence of the methanogenic archaeon, Methanococcus jannaschii.</title>
        <authorList>
            <person name="Bult C.J."/>
            <person name="White O."/>
            <person name="Olsen G.J."/>
            <person name="Zhou L."/>
            <person name="Fleischmann R.D."/>
            <person name="Sutton G.G."/>
            <person name="Blake J.A."/>
            <person name="FitzGerald L.M."/>
            <person name="Clayton R.A."/>
            <person name="Gocayne J.D."/>
            <person name="Kerlavage A.R."/>
            <person name="Dougherty B.A."/>
            <person name="Tomb J.-F."/>
            <person name="Adams M.D."/>
            <person name="Reich C.I."/>
            <person name="Overbeek R."/>
            <person name="Kirkness E.F."/>
            <person name="Weinstock K.G."/>
            <person name="Merrick J.M."/>
            <person name="Glodek A."/>
            <person name="Scott J.L."/>
            <person name="Geoghagen N.S.M."/>
            <person name="Weidman J.F."/>
            <person name="Fuhrmann J.L."/>
            <person name="Nguyen D."/>
            <person name="Utterback T.R."/>
            <person name="Kelley J.M."/>
            <person name="Peterson J.D."/>
            <person name="Sadow P.W."/>
            <person name="Hanna M.C."/>
            <person name="Cotton M.D."/>
            <person name="Roberts K.M."/>
            <person name="Hurst M.A."/>
            <person name="Kaine B.P."/>
            <person name="Borodovsky M."/>
            <person name="Klenk H.-P."/>
            <person name="Fraser C.M."/>
            <person name="Smith H.O."/>
            <person name="Woese C.R."/>
            <person name="Venter J.C."/>
        </authorList>
    </citation>
    <scope>NUCLEOTIDE SEQUENCE [LARGE SCALE GENOMIC DNA]</scope>
    <source>
        <strain>ATCC 43067 / DSM 2661 / JAL-1 / JCM 10045 / NBRC 100440</strain>
    </source>
</reference>
<sequence>MKCSICVHTSKTKKIINYEGKPICVDCLTMLKYPPNFEKMKKEVEEILYNLKKEGGKYHCILAFSGGKDSVLALKLLKEKFKLNPLCVMVDNKYMAKEAIENALNVTKHYQVDLMILNRDYTDLFEDAIKRGESPCRRCSRLILREVWRVTKLLGLKYIITGHELPFGHSAIREMKEGIKMIRLLAPYKFKEEEKYKMLEDLPWKKPDLGGYTTNCLVLGVALERFYDKYGFSFEIDRIATLVRLGLLSKEKAKKELEKPKVPKEIYEELRRRGLKI</sequence>